<comment type="function">
    <text evidence="3 6 7 8">Exhibits mesoderm-dorsalizing activity and neural-inducing activity, but lacks mesoderm-inducing activity. Regulates the expression of specific mesodermal and neural genes. Induces convergent extension movements at the embryonic midline by activating the fgf signaling pathway to induce t/bra expression in the organizer region. Acts with wnt11 to induce Spemann organizer cells and induce axis formation (By similarity). The unprocessed protein antagonizes bmp-signaling.</text>
</comment>
<comment type="subunit">
    <text evidence="6 7">Monomer. The propeptide region interacts with bmp4 in a non-covalent manner.</text>
</comment>
<comment type="subcellular location">
    <subcellularLocation>
        <location evidence="4">Secreted</location>
    </subcellularLocation>
</comment>
<comment type="tissue specificity">
    <text evidence="6">Expressed in the dorsal marginal region of late blastula, becoming restricted to the Spemann organizer at the early gastrula stage.</text>
</comment>
<comment type="developmental stage">
    <text evidence="6">First detected at the blastula stage (stage 8). Expression peaks through the mid-blastula (stage 8.5) to early gastrula (stage 10) and then decreases during gastrulation.</text>
</comment>
<comment type="domain">
    <text evidence="1 7">The propeptide region and the N- and C-terminal thirds of the mature protein are necessary for neural induction activity. Although cleavage doesn't appear essential for activity, residues surrounding the cleavage site are necessary for activity (By similarity). The propeptide region is both necessary and sufficient for bmp-inhibitory activity.</text>
</comment>
<comment type="similarity">
    <text evidence="5">Belongs to the TGF-beta family.</text>
</comment>
<dbReference type="EMBL" id="AB093327">
    <property type="protein sequence ID" value="BAC75530.1"/>
    <property type="molecule type" value="mRNA"/>
</dbReference>
<dbReference type="RefSeq" id="NP_001297040.1">
    <property type="nucleotide sequence ID" value="NM_001310111.1"/>
</dbReference>
<dbReference type="GlyCosmos" id="Q800C0">
    <property type="glycosylation" value="3 sites, No reported glycans"/>
</dbReference>
<dbReference type="GeneID" id="101732995"/>
<dbReference type="KEGG" id="xtr:101732995"/>
<dbReference type="CTD" id="101732995"/>
<dbReference type="Xenbase" id="XB-GENE-29086643">
    <property type="gene designation" value="nodal3.4"/>
</dbReference>
<dbReference type="eggNOG" id="KOG3900">
    <property type="taxonomic scope" value="Eukaryota"/>
</dbReference>
<dbReference type="InParanoid" id="Q800C0"/>
<dbReference type="OrthoDB" id="5949851at2759"/>
<dbReference type="Proteomes" id="UP000008143">
    <property type="component" value="Chromosome 3"/>
</dbReference>
<dbReference type="GO" id="GO:0005576">
    <property type="term" value="C:extracellular region"/>
    <property type="evidence" value="ECO:0007669"/>
    <property type="project" value="UniProtKB-SubCell"/>
</dbReference>
<dbReference type="GO" id="GO:0008083">
    <property type="term" value="F:growth factor activity"/>
    <property type="evidence" value="ECO:0007669"/>
    <property type="project" value="UniProtKB-KW"/>
</dbReference>
<dbReference type="GO" id="GO:0007369">
    <property type="term" value="P:gastrulation"/>
    <property type="evidence" value="ECO:0007669"/>
    <property type="project" value="UniProtKB-KW"/>
</dbReference>
<dbReference type="FunFam" id="2.10.90.10:FF:000026">
    <property type="entry name" value="Nodal homolog 3-A"/>
    <property type="match status" value="1"/>
</dbReference>
<dbReference type="Gene3D" id="2.10.90.10">
    <property type="entry name" value="Cystine-knot cytokines"/>
    <property type="match status" value="1"/>
</dbReference>
<dbReference type="InterPro" id="IPR029034">
    <property type="entry name" value="Cystine-knot_cytokine"/>
</dbReference>
<dbReference type="InterPro" id="IPR001839">
    <property type="entry name" value="TGF-b_C"/>
</dbReference>
<dbReference type="InterPro" id="IPR001111">
    <property type="entry name" value="TGF-b_propeptide"/>
</dbReference>
<dbReference type="InterPro" id="IPR015615">
    <property type="entry name" value="TGF-beta-rel"/>
</dbReference>
<dbReference type="PANTHER" id="PTHR11848:SF295">
    <property type="entry name" value="NODAL HOMOLOG 3-C"/>
    <property type="match status" value="1"/>
</dbReference>
<dbReference type="PANTHER" id="PTHR11848">
    <property type="entry name" value="TGF-BETA FAMILY"/>
    <property type="match status" value="1"/>
</dbReference>
<dbReference type="Pfam" id="PF00019">
    <property type="entry name" value="TGF_beta"/>
    <property type="match status" value="1"/>
</dbReference>
<dbReference type="Pfam" id="PF00688">
    <property type="entry name" value="TGFb_propeptide"/>
    <property type="match status" value="1"/>
</dbReference>
<dbReference type="SMART" id="SM00204">
    <property type="entry name" value="TGFB"/>
    <property type="match status" value="1"/>
</dbReference>
<dbReference type="SUPFAM" id="SSF57501">
    <property type="entry name" value="Cystine-knot cytokines"/>
    <property type="match status" value="1"/>
</dbReference>
<dbReference type="PROSITE" id="PS51362">
    <property type="entry name" value="TGF_BETA_2"/>
    <property type="match status" value="1"/>
</dbReference>
<name>NOD3A_XENTR</name>
<accession>Q800C0</accession>
<protein>
    <recommendedName>
        <fullName>Nodal homolog 3-A</fullName>
    </recommendedName>
    <alternativeName>
        <fullName>Nodal-related protein 3-A</fullName>
    </alternativeName>
    <alternativeName>
        <fullName>Xtnr3-A</fullName>
    </alternativeName>
</protein>
<organism>
    <name type="scientific">Xenopus tropicalis</name>
    <name type="common">Western clawed frog</name>
    <name type="synonym">Silurana tropicalis</name>
    <dbReference type="NCBI Taxonomy" id="8364"/>
    <lineage>
        <taxon>Eukaryota</taxon>
        <taxon>Metazoa</taxon>
        <taxon>Chordata</taxon>
        <taxon>Craniata</taxon>
        <taxon>Vertebrata</taxon>
        <taxon>Euteleostomi</taxon>
        <taxon>Amphibia</taxon>
        <taxon>Batrachia</taxon>
        <taxon>Anura</taxon>
        <taxon>Pipoidea</taxon>
        <taxon>Pipidae</taxon>
        <taxon>Xenopodinae</taxon>
        <taxon>Xenopus</taxon>
        <taxon>Silurana</taxon>
    </lineage>
</organism>
<sequence length="401" mass="45802">MAFLSLFLCLVFSSPLMAMPPALQGRKAISPASILKGPSTDNGARDFHGRKFPHFMMQLYQNIISRRDKDLSNLEHPTLQESDTVQSFIAKSYTTVGNHWTLFFDMSSISTSNELKLAELRICLPSFGKSHSVTVEIYHTKDTKEKLFMGSFKTKISSALDADCKVFNLTMVLHNYLIRGKRLIKDEYIQAKGLLLRDLEKSAAEKGAENVDTLKQDKYHVSDFAAERIILVVFAKERSQAKPDPPSLGKQLFPLKYGMADNANKVNGFRRLRRNKKEKTRIDVGTTPPKPVEEIKPKCRKVDMFVDFQKIGWGSWIVYPKAYNAYRCESACAVPLNETDDATNYSYIKSLLPLSDTERRECPSCVPVKMRSMSMLYYENEDFVLRHHEEMIVEECGFKDI</sequence>
<keyword id="KW-0165">Cleavage on pair of basic residues</keyword>
<keyword id="KW-0217">Developmental protein</keyword>
<keyword id="KW-1015">Disulfide bond</keyword>
<keyword id="KW-0306">Gastrulation</keyword>
<keyword id="KW-0325">Glycoprotein</keyword>
<keyword id="KW-0339">Growth factor</keyword>
<keyword id="KW-1185">Reference proteome</keyword>
<keyword id="KW-0964">Secreted</keyword>
<keyword id="KW-0732">Signal</keyword>
<reference evidence="9 10" key="1">
    <citation type="journal article" date="2004" name="Dev. Biol.">
        <title>Xenopus tropicalis nodal-related gene 3 regulates BMP signaling: an essential role for the pro-region.</title>
        <authorList>
            <person name="Haramoto Y."/>
            <person name="Tanegashima K."/>
            <person name="Onuma Y."/>
            <person name="Takahashi S."/>
            <person name="Sekizaki H."/>
            <person name="Asashima M."/>
        </authorList>
    </citation>
    <scope>NUCLEOTIDE SEQUENCE [MRNA]</scope>
    <scope>FUNCTION</scope>
    <scope>INTERACTION WITH BMP4</scope>
    <scope>TISSUE SPECIFICITY</scope>
    <scope>DEVELOPMENTAL STAGE</scope>
    <source>
        <tissue evidence="6">Gastrula</tissue>
    </source>
</reference>
<reference evidence="9" key="2">
    <citation type="journal article" date="2006" name="Biochem. Biophys. Res. Commun.">
        <title>Two distinct domains in pro-region of Nodal-related 3 are essential for BMP inhibition.</title>
        <authorList>
            <person name="Haramoto Y."/>
            <person name="Takahashi S."/>
            <person name="Asashima M."/>
        </authorList>
    </citation>
    <scope>FUNCTION</scope>
    <scope>INTERACTION WITH BMP4</scope>
    <scope>DOMAIN</scope>
</reference>
<reference evidence="9" key="3">
    <citation type="journal article" date="2007" name="Dev. Genes Evol.">
        <title>Monomeric mature protein of Nodal-related 3 activates Xbra expression.</title>
        <authorList>
            <person name="Haramoto Y."/>
            <person name="Takahashi S."/>
            <person name="Asashima M."/>
        </authorList>
    </citation>
    <scope>FUNCTION</scope>
    <scope>MONOMER</scope>
    <scope>MUTAGENESIS OF PHE-398 AND 398-PHE--ILE-401</scope>
</reference>
<gene>
    <name evidence="4" type="primary">nodal3-A</name>
    <name evidence="10" type="synonym">nr3-A</name>
</gene>
<feature type="signal peptide" evidence="5">
    <location>
        <begin position="1"/>
        <end position="18"/>
    </location>
</feature>
<feature type="propeptide" id="PRO_0000338454" evidence="5">
    <location>
        <begin position="19"/>
        <end position="274"/>
    </location>
</feature>
<feature type="chain" id="PRO_0000338455" description="Nodal homolog 3-A" evidence="5">
    <location>
        <begin position="275"/>
        <end position="401"/>
    </location>
</feature>
<feature type="glycosylation site" description="N-linked (GlcNAc...) asparagine" evidence="5">
    <location>
        <position position="168"/>
    </location>
</feature>
<feature type="glycosylation site" description="N-linked (GlcNAc...) asparagine" evidence="5">
    <location>
        <position position="337"/>
    </location>
</feature>
<feature type="glycosylation site" description="N-linked (GlcNAc...) asparagine" evidence="5">
    <location>
        <position position="344"/>
    </location>
</feature>
<feature type="disulfide bond" evidence="2">
    <location>
        <begin position="299"/>
        <end position="365"/>
    </location>
</feature>
<feature type="disulfide bond" evidence="2">
    <location>
        <begin position="328"/>
        <end position="396"/>
    </location>
</feature>
<feature type="mutagenesis site" description="Still unable to dimerize." evidence="8">
    <original>FKDI</original>
    <variation>CY</variation>
    <location>
        <begin position="398"/>
        <end position="401"/>
    </location>
</feature>
<feature type="mutagenesis site" description="Still unable to dimerize." evidence="8">
    <original>F</original>
    <variation>C</variation>
    <location>
        <position position="398"/>
    </location>
</feature>
<evidence type="ECO:0000250" key="1"/>
<evidence type="ECO:0000250" key="2">
    <source>
        <dbReference type="UniProtKB" id="P43021"/>
    </source>
</evidence>
<evidence type="ECO:0000250" key="3">
    <source>
        <dbReference type="UniProtKB" id="Q91609"/>
    </source>
</evidence>
<evidence type="ECO:0000250" key="4">
    <source>
        <dbReference type="UniProtKB" id="Q91620"/>
    </source>
</evidence>
<evidence type="ECO:0000255" key="5"/>
<evidence type="ECO:0000269" key="6">
    <source>
    </source>
</evidence>
<evidence type="ECO:0000269" key="7">
    <source>
    </source>
</evidence>
<evidence type="ECO:0000269" key="8">
    <source>
    </source>
</evidence>
<evidence type="ECO:0000305" key="9"/>
<evidence type="ECO:0000312" key="10">
    <source>
        <dbReference type="EMBL" id="BAC75530.1"/>
    </source>
</evidence>
<proteinExistence type="evidence at protein level"/>